<proteinExistence type="inferred from homology"/>
<feature type="chain" id="PRO_0000234801" description="Tyrosine--tRNA ligase">
    <location>
        <begin position="1"/>
        <end position="428"/>
    </location>
</feature>
<feature type="domain" description="S4 RNA-binding" evidence="1">
    <location>
        <begin position="361"/>
        <end position="427"/>
    </location>
</feature>
<feature type="short sequence motif" description="'HIGH' region">
    <location>
        <begin position="41"/>
        <end position="50"/>
    </location>
</feature>
<feature type="short sequence motif" description="'KMSKS' region">
    <location>
        <begin position="229"/>
        <end position="233"/>
    </location>
</feature>
<feature type="binding site" evidence="1">
    <location>
        <position position="36"/>
    </location>
    <ligand>
        <name>L-tyrosine</name>
        <dbReference type="ChEBI" id="CHEBI:58315"/>
    </ligand>
</feature>
<feature type="binding site" evidence="1">
    <location>
        <position position="169"/>
    </location>
    <ligand>
        <name>L-tyrosine</name>
        <dbReference type="ChEBI" id="CHEBI:58315"/>
    </ligand>
</feature>
<feature type="binding site" evidence="1">
    <location>
        <position position="173"/>
    </location>
    <ligand>
        <name>L-tyrosine</name>
        <dbReference type="ChEBI" id="CHEBI:58315"/>
    </ligand>
</feature>
<feature type="binding site" evidence="1">
    <location>
        <position position="232"/>
    </location>
    <ligand>
        <name>ATP</name>
        <dbReference type="ChEBI" id="CHEBI:30616"/>
    </ligand>
</feature>
<evidence type="ECO:0000255" key="1">
    <source>
        <dbReference type="HAMAP-Rule" id="MF_02006"/>
    </source>
</evidence>
<comment type="function">
    <text evidence="1">Catalyzes the attachment of tyrosine to tRNA(Tyr) in a two-step reaction: tyrosine is first activated by ATP to form Tyr-AMP and then transferred to the acceptor end of tRNA(Tyr).</text>
</comment>
<comment type="catalytic activity">
    <reaction evidence="1">
        <text>tRNA(Tyr) + L-tyrosine + ATP = L-tyrosyl-tRNA(Tyr) + AMP + diphosphate + H(+)</text>
        <dbReference type="Rhea" id="RHEA:10220"/>
        <dbReference type="Rhea" id="RHEA-COMP:9706"/>
        <dbReference type="Rhea" id="RHEA-COMP:9707"/>
        <dbReference type="ChEBI" id="CHEBI:15378"/>
        <dbReference type="ChEBI" id="CHEBI:30616"/>
        <dbReference type="ChEBI" id="CHEBI:33019"/>
        <dbReference type="ChEBI" id="CHEBI:58315"/>
        <dbReference type="ChEBI" id="CHEBI:78442"/>
        <dbReference type="ChEBI" id="CHEBI:78536"/>
        <dbReference type="ChEBI" id="CHEBI:456215"/>
        <dbReference type="EC" id="6.1.1.1"/>
    </reaction>
</comment>
<comment type="subunit">
    <text evidence="1">Homodimer.</text>
</comment>
<comment type="subcellular location">
    <subcellularLocation>
        <location evidence="1">Cytoplasm</location>
    </subcellularLocation>
</comment>
<comment type="similarity">
    <text evidence="1">Belongs to the class-I aminoacyl-tRNA synthetase family. TyrS type 1 subfamily.</text>
</comment>
<keyword id="KW-0030">Aminoacyl-tRNA synthetase</keyword>
<keyword id="KW-0067">ATP-binding</keyword>
<keyword id="KW-0963">Cytoplasm</keyword>
<keyword id="KW-0436">Ligase</keyword>
<keyword id="KW-0547">Nucleotide-binding</keyword>
<keyword id="KW-0648">Protein biosynthesis</keyword>
<keyword id="KW-1185">Reference proteome</keyword>
<keyword id="KW-0694">RNA-binding</keyword>
<organism>
    <name type="scientific">Syntrophus aciditrophicus (strain SB)</name>
    <dbReference type="NCBI Taxonomy" id="56780"/>
    <lineage>
        <taxon>Bacteria</taxon>
        <taxon>Pseudomonadati</taxon>
        <taxon>Thermodesulfobacteriota</taxon>
        <taxon>Syntrophia</taxon>
        <taxon>Syntrophales</taxon>
        <taxon>Syntrophaceae</taxon>
        <taxon>Syntrophus</taxon>
    </lineage>
</organism>
<accession>Q2LR98</accession>
<protein>
    <recommendedName>
        <fullName evidence="1">Tyrosine--tRNA ligase</fullName>
        <ecNumber evidence="1">6.1.1.1</ecNumber>
    </recommendedName>
    <alternativeName>
        <fullName evidence="1">Tyrosyl-tRNA synthetase</fullName>
        <shortName evidence="1">TyrRS</shortName>
    </alternativeName>
</protein>
<sequence length="428" mass="48282">MILKNVYDVFMERGFIEQVTDENAVRKALEAPLACYIGFDPTARSLHIGSLVPIMALIHLQRHGHTSIALVGGGTALIGDPSGKTEMRQILTREKIELNATCMRRQFARYLSFEDKKAMMINNADWLTKLNYISFLRDIGRHFSVNKMLAAESYKMRLEKGLNFIEFNYMLLQAYDFLYLFQNHNCVMQMGGNDQWGNMLAGVDLIRRVEGKVAHSMTFPLLTTATGQKMGKTEKGAVWLDRELTSPYEYYQYWINTGDIDVGKFLALFTFLPMEEIHQVKSLSDKELNMAKAILAFEATKITHGEDAALAAWNASAVAFGVKLIDTSLMPSSTIPRGQLSQDASAIPFIKKSWNELAKGIPAYEIMHECGLCSSKSEARRLIAQGGGYVNENPIFAFDELITTEHLDRSGQIKLRKGKKKYMIIKVE</sequence>
<reference key="1">
    <citation type="journal article" date="2007" name="Proc. Natl. Acad. Sci. U.S.A.">
        <title>The genome of Syntrophus aciditrophicus: life at the thermodynamic limit of microbial growth.</title>
        <authorList>
            <person name="McInerney M.J."/>
            <person name="Rohlin L."/>
            <person name="Mouttaki H."/>
            <person name="Kim U."/>
            <person name="Krupp R.S."/>
            <person name="Rios-Hernandez L."/>
            <person name="Sieber J."/>
            <person name="Struchtemeyer C.G."/>
            <person name="Bhattacharyya A."/>
            <person name="Campbell J.W."/>
            <person name="Gunsalus R.P."/>
        </authorList>
    </citation>
    <scope>NUCLEOTIDE SEQUENCE [LARGE SCALE GENOMIC DNA]</scope>
    <source>
        <strain>SB</strain>
    </source>
</reference>
<name>SYY_SYNAS</name>
<gene>
    <name evidence="1" type="primary">tyrS</name>
    <name type="ordered locus">SYNAS_07330</name>
    <name type="ORF">SYN_02977</name>
</gene>
<dbReference type="EC" id="6.1.1.1" evidence="1"/>
<dbReference type="EMBL" id="CP000252">
    <property type="protein sequence ID" value="ABC76612.1"/>
    <property type="molecule type" value="Genomic_DNA"/>
</dbReference>
<dbReference type="RefSeq" id="WP_011416646.1">
    <property type="nucleotide sequence ID" value="NC_007759.1"/>
</dbReference>
<dbReference type="SMR" id="Q2LR98"/>
<dbReference type="FunCoup" id="Q2LR98">
    <property type="interactions" value="497"/>
</dbReference>
<dbReference type="STRING" id="56780.SYN_02977"/>
<dbReference type="KEGG" id="sat:SYN_02977"/>
<dbReference type="eggNOG" id="COG0162">
    <property type="taxonomic scope" value="Bacteria"/>
</dbReference>
<dbReference type="HOGENOM" id="CLU_024003_0_3_7"/>
<dbReference type="InParanoid" id="Q2LR98"/>
<dbReference type="OrthoDB" id="9804243at2"/>
<dbReference type="Proteomes" id="UP000001933">
    <property type="component" value="Chromosome"/>
</dbReference>
<dbReference type="GO" id="GO:0005829">
    <property type="term" value="C:cytosol"/>
    <property type="evidence" value="ECO:0007669"/>
    <property type="project" value="TreeGrafter"/>
</dbReference>
<dbReference type="GO" id="GO:0005524">
    <property type="term" value="F:ATP binding"/>
    <property type="evidence" value="ECO:0007669"/>
    <property type="project" value="UniProtKB-UniRule"/>
</dbReference>
<dbReference type="GO" id="GO:0003723">
    <property type="term" value="F:RNA binding"/>
    <property type="evidence" value="ECO:0007669"/>
    <property type="project" value="UniProtKB-KW"/>
</dbReference>
<dbReference type="GO" id="GO:0004831">
    <property type="term" value="F:tyrosine-tRNA ligase activity"/>
    <property type="evidence" value="ECO:0007669"/>
    <property type="project" value="UniProtKB-UniRule"/>
</dbReference>
<dbReference type="GO" id="GO:0006437">
    <property type="term" value="P:tyrosyl-tRNA aminoacylation"/>
    <property type="evidence" value="ECO:0007669"/>
    <property type="project" value="UniProtKB-UniRule"/>
</dbReference>
<dbReference type="CDD" id="cd00165">
    <property type="entry name" value="S4"/>
    <property type="match status" value="1"/>
</dbReference>
<dbReference type="CDD" id="cd00805">
    <property type="entry name" value="TyrRS_core"/>
    <property type="match status" value="1"/>
</dbReference>
<dbReference type="FunFam" id="1.10.240.10:FF:000001">
    <property type="entry name" value="Tyrosine--tRNA ligase"/>
    <property type="match status" value="1"/>
</dbReference>
<dbReference type="Gene3D" id="3.40.50.620">
    <property type="entry name" value="HUPs"/>
    <property type="match status" value="1"/>
</dbReference>
<dbReference type="Gene3D" id="3.10.290.10">
    <property type="entry name" value="RNA-binding S4 domain"/>
    <property type="match status" value="1"/>
</dbReference>
<dbReference type="Gene3D" id="1.10.240.10">
    <property type="entry name" value="Tyrosyl-Transfer RNA Synthetase"/>
    <property type="match status" value="1"/>
</dbReference>
<dbReference type="HAMAP" id="MF_02006">
    <property type="entry name" value="Tyr_tRNA_synth_type1"/>
    <property type="match status" value="1"/>
</dbReference>
<dbReference type="InterPro" id="IPR002305">
    <property type="entry name" value="aa-tRNA-synth_Ic"/>
</dbReference>
<dbReference type="InterPro" id="IPR014729">
    <property type="entry name" value="Rossmann-like_a/b/a_fold"/>
</dbReference>
<dbReference type="InterPro" id="IPR036986">
    <property type="entry name" value="S4_RNA-bd_sf"/>
</dbReference>
<dbReference type="InterPro" id="IPR054608">
    <property type="entry name" value="SYY-like_C"/>
</dbReference>
<dbReference type="InterPro" id="IPR002307">
    <property type="entry name" value="Tyr-tRNA-ligase"/>
</dbReference>
<dbReference type="InterPro" id="IPR024088">
    <property type="entry name" value="Tyr-tRNA-ligase_bac-type"/>
</dbReference>
<dbReference type="InterPro" id="IPR024107">
    <property type="entry name" value="Tyr-tRNA-ligase_bac_1"/>
</dbReference>
<dbReference type="NCBIfam" id="TIGR00234">
    <property type="entry name" value="tyrS"/>
    <property type="match status" value="1"/>
</dbReference>
<dbReference type="PANTHER" id="PTHR11766:SF0">
    <property type="entry name" value="TYROSINE--TRNA LIGASE, MITOCHONDRIAL"/>
    <property type="match status" value="1"/>
</dbReference>
<dbReference type="PANTHER" id="PTHR11766">
    <property type="entry name" value="TYROSYL-TRNA SYNTHETASE"/>
    <property type="match status" value="1"/>
</dbReference>
<dbReference type="Pfam" id="PF22421">
    <property type="entry name" value="SYY_C-terminal"/>
    <property type="match status" value="1"/>
</dbReference>
<dbReference type="Pfam" id="PF00579">
    <property type="entry name" value="tRNA-synt_1b"/>
    <property type="match status" value="1"/>
</dbReference>
<dbReference type="PRINTS" id="PR01040">
    <property type="entry name" value="TRNASYNTHTYR"/>
</dbReference>
<dbReference type="SUPFAM" id="SSF55174">
    <property type="entry name" value="Alpha-L RNA-binding motif"/>
    <property type="match status" value="1"/>
</dbReference>
<dbReference type="SUPFAM" id="SSF52374">
    <property type="entry name" value="Nucleotidylyl transferase"/>
    <property type="match status" value="1"/>
</dbReference>
<dbReference type="PROSITE" id="PS50889">
    <property type="entry name" value="S4"/>
    <property type="match status" value="1"/>
</dbReference>